<dbReference type="EC" id="2.4.2.52"/>
<dbReference type="EMBL" id="AF121266">
    <property type="protein sequence ID" value="AAF20288.1"/>
    <property type="molecule type" value="Genomic_DNA"/>
</dbReference>
<dbReference type="GO" id="GO:0005524">
    <property type="term" value="F:ATP binding"/>
    <property type="evidence" value="ECO:0007669"/>
    <property type="project" value="UniProtKB-KW"/>
</dbReference>
<dbReference type="GO" id="GO:0046917">
    <property type="term" value="F:triphosphoribosyl-dephospho-CoA synthase activity"/>
    <property type="evidence" value="ECO:0007669"/>
    <property type="project" value="UniProtKB-UniRule"/>
</dbReference>
<dbReference type="GO" id="GO:0051191">
    <property type="term" value="P:prosthetic group biosynthetic process"/>
    <property type="evidence" value="ECO:0007669"/>
    <property type="project" value="TreeGrafter"/>
</dbReference>
<dbReference type="Gene3D" id="1.10.4200.10">
    <property type="entry name" value="Triphosphoribosyl-dephospho-CoA protein"/>
    <property type="match status" value="1"/>
</dbReference>
<dbReference type="HAMAP" id="MF_01883">
    <property type="entry name" value="MdcB"/>
    <property type="match status" value="1"/>
</dbReference>
<dbReference type="InterPro" id="IPR002736">
    <property type="entry name" value="CitG"/>
</dbReference>
<dbReference type="InterPro" id="IPR017555">
    <property type="entry name" value="TriPribosyl-deP-CoA_syn"/>
</dbReference>
<dbReference type="NCBIfam" id="TIGR03132">
    <property type="entry name" value="malonate_mdcB"/>
    <property type="match status" value="1"/>
</dbReference>
<dbReference type="PANTHER" id="PTHR30201:SF2">
    <property type="entry name" value="2-(5''-TRIPHOSPHORIBOSYL)-3'-DEPHOSPHOCOENZYME-A SYNTHASE"/>
    <property type="match status" value="1"/>
</dbReference>
<dbReference type="PANTHER" id="PTHR30201">
    <property type="entry name" value="TRIPHOSPHORIBOSYL-DEPHOSPHO-COA SYNTHASE"/>
    <property type="match status" value="1"/>
</dbReference>
<dbReference type="Pfam" id="PF01874">
    <property type="entry name" value="CitG"/>
    <property type="match status" value="1"/>
</dbReference>
<feature type="chain" id="PRO_0000214670" description="Probable 2-(5''-triphosphoribosyl)-3'-dephosphocoenzyme-A synthase">
    <location>
        <begin position="1"/>
        <end position="292"/>
    </location>
</feature>
<evidence type="ECO:0000305" key="1"/>
<proteinExistence type="inferred from homology"/>
<gene>
    <name type="primary">mdcB</name>
</gene>
<comment type="function">
    <text>Involved in the formation of 2-(5''-phosphoribosyl)-3'-dephosphocoenzyme-A, the prosthetic group of the acyl-carrier protein of the malonate decarboxylase.</text>
</comment>
<comment type="catalytic activity">
    <reaction>
        <text>3'-dephospho-CoA + ATP = 2'-(5''-triphospho-alpha-D-ribosyl)-3'-dephospho-CoA + adenine</text>
        <dbReference type="Rhea" id="RHEA:15117"/>
        <dbReference type="ChEBI" id="CHEBI:16708"/>
        <dbReference type="ChEBI" id="CHEBI:30616"/>
        <dbReference type="ChEBI" id="CHEBI:57328"/>
        <dbReference type="ChEBI" id="CHEBI:61378"/>
        <dbReference type="EC" id="2.4.2.52"/>
    </reaction>
</comment>
<comment type="similarity">
    <text evidence="1">Belongs to the CitG/MdcB family.</text>
</comment>
<sequence length="292" mass="33035">MQTVQKHDHLFLDISQHAMRLDLLARTALYEEVSLAHKPGLVCPTTQGSHQDMDFALFERSIQSLTYYFQEQCLNGYHEVSFDSIRQCGIQAEQDMMAATKQINTHKGAIFNLGFASAAVGKCFAQDILLNAISISRMIQQTWQEELLHHLERNPNSHGQRMRSQYGITGAIEEVASGFKTVLDVAVPHYLEIYAKTGDKKRASLQALFALMSHLQDTNIVWRGGLSALYIVQDMAKQFLARGGVLQHNWMQDVSKVEDYFVRHHLSPGGSADLLGVTLFMLKVEHEFRNII</sequence>
<reference key="1">
    <citation type="journal article" date="1999" name="Eur. J. Biochem.">
        <title>Functional evaluation of the genes involved in malonate decarboxylation by Acinetobacter calcoaceticus.</title>
        <authorList>
            <person name="Koo J.H."/>
            <person name="Kim Y.S."/>
        </authorList>
    </citation>
    <scope>NUCLEOTIDE SEQUENCE [GENOMIC DNA]</scope>
</reference>
<name>MDCB_ACICA</name>
<accession>Q9RGM3</accession>
<keyword id="KW-0067">ATP-binding</keyword>
<keyword id="KW-0547">Nucleotide-binding</keyword>
<keyword id="KW-0808">Transferase</keyword>
<organism>
    <name type="scientific">Acinetobacter calcoaceticus</name>
    <dbReference type="NCBI Taxonomy" id="471"/>
    <lineage>
        <taxon>Bacteria</taxon>
        <taxon>Pseudomonadati</taxon>
        <taxon>Pseudomonadota</taxon>
        <taxon>Gammaproteobacteria</taxon>
        <taxon>Moraxellales</taxon>
        <taxon>Moraxellaceae</taxon>
        <taxon>Acinetobacter</taxon>
        <taxon>Acinetobacter calcoaceticus/baumannii complex</taxon>
    </lineage>
</organism>
<protein>
    <recommendedName>
        <fullName>Probable 2-(5''-triphosphoribosyl)-3'-dephosphocoenzyme-A synthase</fullName>
        <shortName>2-(5''-triphosphoribosyl)-3'-dephospho-CoA synthase</shortName>
        <ecNumber>2.4.2.52</ecNumber>
    </recommendedName>
</protein>